<proteinExistence type="evidence at protein level"/>
<protein>
    <recommendedName>
        <fullName>Ras-related protein rapA</fullName>
        <ecNumber evidence="2">3.6.5.2</ecNumber>
    </recommendedName>
    <alternativeName>
        <fullName>Ras-related protein rap-1</fullName>
    </alternativeName>
</protein>
<gene>
    <name type="primary">rapA</name>
    <name type="synonym">rap1</name>
    <name type="ORF">DDB_G0291237</name>
</gene>
<sequence length="186" mass="21006">MPLREFKIVVLGSGGVGKSALTVQFVQGIFVEKYDPTIEDSYRKQVEVDSNQCMLEILDTAGTEQFTAMRDLYMKNGQGFVLVYSIISNSTFNELPDLREQILRVKDCEDVPMVLVGNKCDLHDQRVISTEQGEELARKFGDCYFLEASAKNKVNVEQIFYNLIRQINRKNPVGPPSKAKSKCALL</sequence>
<reference key="1">
    <citation type="journal article" date="1990" name="Nucleic Acids Res.">
        <title>A ras-related gene from the lower eukaryote Dictyostelium that is highly conserved relative to the human rap genes.</title>
        <authorList>
            <person name="Robbins S.M."/>
            <person name="Suttorp V.V."/>
            <person name="Weeks G."/>
            <person name="Spiegelman G.B."/>
        </authorList>
    </citation>
    <scope>NUCLEOTIDE SEQUENCE [MRNA]</scope>
    <source>
        <strain>AX2</strain>
    </source>
</reference>
<reference key="2">
    <citation type="journal article" date="2005" name="Nature">
        <title>The genome of the social amoeba Dictyostelium discoideum.</title>
        <authorList>
            <person name="Eichinger L."/>
            <person name="Pachebat J.A."/>
            <person name="Gloeckner G."/>
            <person name="Rajandream M.A."/>
            <person name="Sucgang R."/>
            <person name="Berriman M."/>
            <person name="Song J."/>
            <person name="Olsen R."/>
            <person name="Szafranski K."/>
            <person name="Xu Q."/>
            <person name="Tunggal B."/>
            <person name="Kummerfeld S."/>
            <person name="Madera M."/>
            <person name="Konfortov B.A."/>
            <person name="Rivero F."/>
            <person name="Bankier A.T."/>
            <person name="Lehmann R."/>
            <person name="Hamlin N."/>
            <person name="Davies R."/>
            <person name="Gaudet P."/>
            <person name="Fey P."/>
            <person name="Pilcher K."/>
            <person name="Chen G."/>
            <person name="Saunders D."/>
            <person name="Sodergren E.J."/>
            <person name="Davis P."/>
            <person name="Kerhornou A."/>
            <person name="Nie X."/>
            <person name="Hall N."/>
            <person name="Anjard C."/>
            <person name="Hemphill L."/>
            <person name="Bason N."/>
            <person name="Farbrother P."/>
            <person name="Desany B."/>
            <person name="Just E."/>
            <person name="Morio T."/>
            <person name="Rost R."/>
            <person name="Churcher C.M."/>
            <person name="Cooper J."/>
            <person name="Haydock S."/>
            <person name="van Driessche N."/>
            <person name="Cronin A."/>
            <person name="Goodhead I."/>
            <person name="Muzny D.M."/>
            <person name="Mourier T."/>
            <person name="Pain A."/>
            <person name="Lu M."/>
            <person name="Harper D."/>
            <person name="Lindsay R."/>
            <person name="Hauser H."/>
            <person name="James K.D."/>
            <person name="Quiles M."/>
            <person name="Madan Babu M."/>
            <person name="Saito T."/>
            <person name="Buchrieser C."/>
            <person name="Wardroper A."/>
            <person name="Felder M."/>
            <person name="Thangavelu M."/>
            <person name="Johnson D."/>
            <person name="Knights A."/>
            <person name="Loulseged H."/>
            <person name="Mungall K.L."/>
            <person name="Oliver K."/>
            <person name="Price C."/>
            <person name="Quail M.A."/>
            <person name="Urushihara H."/>
            <person name="Hernandez J."/>
            <person name="Rabbinowitsch E."/>
            <person name="Steffen D."/>
            <person name="Sanders M."/>
            <person name="Ma J."/>
            <person name="Kohara Y."/>
            <person name="Sharp S."/>
            <person name="Simmonds M.N."/>
            <person name="Spiegler S."/>
            <person name="Tivey A."/>
            <person name="Sugano S."/>
            <person name="White B."/>
            <person name="Walker D."/>
            <person name="Woodward J.R."/>
            <person name="Winckler T."/>
            <person name="Tanaka Y."/>
            <person name="Shaulsky G."/>
            <person name="Schleicher M."/>
            <person name="Weinstock G.M."/>
            <person name="Rosenthal A."/>
            <person name="Cox E.C."/>
            <person name="Chisholm R.L."/>
            <person name="Gibbs R.A."/>
            <person name="Loomis W.F."/>
            <person name="Platzer M."/>
            <person name="Kay R.R."/>
            <person name="Williams J.G."/>
            <person name="Dear P.H."/>
            <person name="Noegel A.A."/>
            <person name="Barrell B.G."/>
            <person name="Kuspa A."/>
        </authorList>
    </citation>
    <scope>NUCLEOTIDE SEQUENCE [LARGE SCALE GENOMIC DNA]</scope>
    <source>
        <strain>AX4</strain>
    </source>
</reference>
<reference key="3">
    <citation type="journal article" date="1999" name="Mol. Biol. Cell">
        <title>The small Mr Ras-like GTPase Rap1 and the phospholipase C pathway act to regulate phagocytosis in Dictyostelium discoideum.</title>
        <authorList>
            <person name="Seastone D.J."/>
            <person name="Zhang L."/>
            <person name="Buczynski G."/>
            <person name="Rebstein P."/>
            <person name="Weeks G."/>
            <person name="Spiegelman G."/>
            <person name="Cardelli J."/>
        </authorList>
    </citation>
    <scope>FUNCTION</scope>
    <scope>MUTAGENESIS OF GLY-12</scope>
</reference>
<reference key="4">
    <citation type="journal article" date="2002" name="J. Cell Sci.">
        <title>Evidence for a role for the Dictyostelium Rap1 in cell viability and the response to osmotic stress.</title>
        <authorList>
            <person name="Kang R."/>
            <person name="Kae H."/>
            <person name="Ip H."/>
            <person name="Spiegelman G.B."/>
            <person name="Weeks G."/>
        </authorList>
    </citation>
    <scope>DISRUPTION PHENOTYPE</scope>
    <scope>MUTAGENESIS OF GLY-12</scope>
    <scope>FUNCTION</scope>
    <scope>INTERACTION WITH RALGDS</scope>
</reference>
<reference key="5">
    <citation type="journal article" date="2006" name="Mol. Cell. Proteomics">
        <title>Proteomics fingerprinting of phagosome maturation and evidence for the role of a Galpha during uptake.</title>
        <authorList>
            <person name="Gotthardt D."/>
            <person name="Blancheteau V."/>
            <person name="Bosserhoff A."/>
            <person name="Ruppert T."/>
            <person name="Delorenzi M."/>
            <person name="Soldati T."/>
        </authorList>
    </citation>
    <scope>IDENTIFICATION BY MASS SPECTROMETRY [LARGE SCALE ANALYSIS]</scope>
    <source>
        <strain>AX2</strain>
    </source>
</reference>
<reference key="6">
    <citation type="journal article" date="2016" name="Dev. Cell">
        <title>A Galpha-Stimulated RapGEF Is a Receptor-Proximal Regulator of Dictyostelium Chemotaxis.</title>
        <authorList>
            <person name="Liu Y."/>
            <person name="Lacal J."/>
            <person name="Veltman D.M."/>
            <person name="Fusetti F."/>
            <person name="van Haastert P.J."/>
            <person name="Firtel R.A."/>
            <person name="Kortholt A."/>
        </authorList>
    </citation>
    <scope>INTERACTION WITH GFLB</scope>
    <scope>FUNCTION</scope>
</reference>
<comment type="function">
    <text evidence="3 4 5">G protein of the Ras family that positively regulates phagocytosis and negatively regulates macropinocytosis (PubMed:9950684). May be involved in the activation of guanylyl cyclase during the response to hyperosmotic conditions (PubMed:12186953). Overexpressing cells generate alterations in cell shape and contractile responses (PubMed:12186953). Involved in chemotaxis via regulation of the balance of Ras and Rap signaling at the leading edge of chemotaxing cells (PubMed:27237792).</text>
</comment>
<comment type="catalytic activity">
    <reaction evidence="2">
        <text>GTP + H2O = GDP + phosphate + H(+)</text>
        <dbReference type="Rhea" id="RHEA:19669"/>
        <dbReference type="ChEBI" id="CHEBI:15377"/>
        <dbReference type="ChEBI" id="CHEBI:15378"/>
        <dbReference type="ChEBI" id="CHEBI:37565"/>
        <dbReference type="ChEBI" id="CHEBI:43474"/>
        <dbReference type="ChEBI" id="CHEBI:58189"/>
        <dbReference type="EC" id="3.6.5.2"/>
    </reaction>
</comment>
<comment type="subunit">
    <text evidence="3 4">Interacts with ralGDS (only when rapA is in its GTP-bound state) (PubMed:12186953). Interacts with the Rap guanine nucleotide exchange factor glfB (PubMed:27237792).</text>
</comment>
<comment type="subcellular location">
    <subcellularLocation>
        <location evidence="6">Cell membrane</location>
        <topology evidence="6">Lipid-anchor</topology>
        <orientation evidence="6">Cytoplasmic side</orientation>
    </subcellularLocation>
</comment>
<comment type="developmental stage">
    <text>This protein is expressed at all stages during development but is expressed maximally during the aggregation and culmination periods.</text>
</comment>
<comment type="disruption phenotype">
    <text evidence="3">Null cells exhibit reduced viability in response to osmotic shock, reduced accumulation of cGMP in response to osmotic shock and decrease in growth rate.</text>
</comment>
<comment type="similarity">
    <text evidence="6">Belongs to the small GTPase superfamily. Ras family.</text>
</comment>
<evidence type="ECO:0000250" key="1"/>
<evidence type="ECO:0000250" key="2">
    <source>
        <dbReference type="UniProtKB" id="P10114"/>
    </source>
</evidence>
<evidence type="ECO:0000269" key="3">
    <source>
    </source>
</evidence>
<evidence type="ECO:0000269" key="4">
    <source>
    </source>
</evidence>
<evidence type="ECO:0000269" key="5">
    <source>
    </source>
</evidence>
<evidence type="ECO:0000305" key="6"/>
<accession>P18613</accession>
<accession>Q54EV9</accession>
<keyword id="KW-1003">Cell membrane</keyword>
<keyword id="KW-0342">GTP-binding</keyword>
<keyword id="KW-0378">Hydrolase</keyword>
<keyword id="KW-0449">Lipoprotein</keyword>
<keyword id="KW-0472">Membrane</keyword>
<keyword id="KW-0488">Methylation</keyword>
<keyword id="KW-0547">Nucleotide-binding</keyword>
<keyword id="KW-0636">Prenylation</keyword>
<keyword id="KW-1185">Reference proteome</keyword>
<dbReference type="EC" id="3.6.5.2" evidence="2"/>
<dbReference type="EMBL" id="X54291">
    <property type="protein sequence ID" value="CAA38185.1"/>
    <property type="molecule type" value="mRNA"/>
</dbReference>
<dbReference type="EMBL" id="AAFI02000177">
    <property type="protein sequence ID" value="EAL61602.1"/>
    <property type="molecule type" value="Genomic_DNA"/>
</dbReference>
<dbReference type="PIR" id="S11229">
    <property type="entry name" value="S11229"/>
</dbReference>
<dbReference type="RefSeq" id="XP_635131.1">
    <property type="nucleotide sequence ID" value="XM_630039.1"/>
</dbReference>
<dbReference type="SMR" id="P18613"/>
<dbReference type="FunCoup" id="P18613">
    <property type="interactions" value="86"/>
</dbReference>
<dbReference type="IntAct" id="P18613">
    <property type="interactions" value="1"/>
</dbReference>
<dbReference type="STRING" id="44689.P18613"/>
<dbReference type="PaxDb" id="44689-DDB0216229"/>
<dbReference type="ABCD" id="P18613">
    <property type="antibodies" value="5 sequenced antibodies"/>
</dbReference>
<dbReference type="EnsemblProtists" id="EAL61602">
    <property type="protein sequence ID" value="EAL61602"/>
    <property type="gene ID" value="DDB_G0291237"/>
</dbReference>
<dbReference type="GeneID" id="8628077"/>
<dbReference type="KEGG" id="ddi:DDB_G0291237"/>
<dbReference type="dictyBase" id="DDB_G0291237">
    <property type="gene designation" value="rapA"/>
</dbReference>
<dbReference type="VEuPathDB" id="AmoebaDB:DDB_G0291237"/>
<dbReference type="eggNOG" id="KOG0395">
    <property type="taxonomic scope" value="Eukaryota"/>
</dbReference>
<dbReference type="HOGENOM" id="CLU_041217_9_8_1"/>
<dbReference type="InParanoid" id="P18613"/>
<dbReference type="OMA" id="MPLREFK"/>
<dbReference type="PhylomeDB" id="P18613"/>
<dbReference type="Reactome" id="R-DDI-354192">
    <property type="pathway name" value="Integrin signaling"/>
</dbReference>
<dbReference type="Reactome" id="R-DDI-381676">
    <property type="pathway name" value="Glucagon-like Peptide-1 (GLP1) regulates insulin secretion"/>
</dbReference>
<dbReference type="Reactome" id="R-DDI-392517">
    <property type="pathway name" value="Rap1 signalling"/>
</dbReference>
<dbReference type="Reactome" id="R-DDI-6798695">
    <property type="pathway name" value="Neutrophil degranulation"/>
</dbReference>
<dbReference type="PRO" id="PR:P18613"/>
<dbReference type="Proteomes" id="UP000002195">
    <property type="component" value="Chromosome 6"/>
</dbReference>
<dbReference type="GO" id="GO:0005938">
    <property type="term" value="C:cell cortex"/>
    <property type="evidence" value="ECO:0000314"/>
    <property type="project" value="dictyBase"/>
</dbReference>
<dbReference type="GO" id="GO:0060187">
    <property type="term" value="C:cell pole"/>
    <property type="evidence" value="ECO:0000314"/>
    <property type="project" value="dictyBase"/>
</dbReference>
<dbReference type="GO" id="GO:0005829">
    <property type="term" value="C:cytosol"/>
    <property type="evidence" value="ECO:0000314"/>
    <property type="project" value="dictyBase"/>
</dbReference>
<dbReference type="GO" id="GO:0031012">
    <property type="term" value="C:extracellular matrix"/>
    <property type="evidence" value="ECO:0007005"/>
    <property type="project" value="dictyBase"/>
</dbReference>
<dbReference type="GO" id="GO:0031256">
    <property type="term" value="C:leading edge membrane"/>
    <property type="evidence" value="ECO:0000314"/>
    <property type="project" value="dictyBase"/>
</dbReference>
<dbReference type="GO" id="GO:0005811">
    <property type="term" value="C:lipid droplet"/>
    <property type="evidence" value="ECO:0007005"/>
    <property type="project" value="dictyBase"/>
</dbReference>
<dbReference type="GO" id="GO:0140220">
    <property type="term" value="C:pathogen-containing vacuole"/>
    <property type="evidence" value="ECO:0000314"/>
    <property type="project" value="dictyBase"/>
</dbReference>
<dbReference type="GO" id="GO:0045335">
    <property type="term" value="C:phagocytic vesicle"/>
    <property type="evidence" value="ECO:0007005"/>
    <property type="project" value="dictyBase"/>
</dbReference>
<dbReference type="GO" id="GO:0005886">
    <property type="term" value="C:plasma membrane"/>
    <property type="evidence" value="ECO:0000314"/>
    <property type="project" value="dictyBase"/>
</dbReference>
<dbReference type="GO" id="GO:0031982">
    <property type="term" value="C:vesicle"/>
    <property type="evidence" value="ECO:0000314"/>
    <property type="project" value="dictyBase"/>
</dbReference>
<dbReference type="GO" id="GO:0003925">
    <property type="term" value="F:G protein activity"/>
    <property type="evidence" value="ECO:0000314"/>
    <property type="project" value="dictyBase"/>
</dbReference>
<dbReference type="GO" id="GO:0019003">
    <property type="term" value="F:GDP binding"/>
    <property type="evidence" value="ECO:0000318"/>
    <property type="project" value="GO_Central"/>
</dbReference>
<dbReference type="GO" id="GO:0005525">
    <property type="term" value="F:GTP binding"/>
    <property type="evidence" value="ECO:0000314"/>
    <property type="project" value="dictyBase"/>
</dbReference>
<dbReference type="GO" id="GO:0005096">
    <property type="term" value="F:GTPase activator activity"/>
    <property type="evidence" value="ECO:0000314"/>
    <property type="project" value="dictyBase"/>
</dbReference>
<dbReference type="GO" id="GO:0003924">
    <property type="term" value="F:GTPase activity"/>
    <property type="evidence" value="ECO:0000318"/>
    <property type="project" value="GO_Central"/>
</dbReference>
<dbReference type="GO" id="GO:0030250">
    <property type="term" value="F:guanylate cyclase activator activity"/>
    <property type="evidence" value="ECO:0000315"/>
    <property type="project" value="dictyBase"/>
</dbReference>
<dbReference type="GO" id="GO:0031267">
    <property type="term" value="F:small GTPase binding"/>
    <property type="evidence" value="ECO:0000314"/>
    <property type="project" value="dictyBase"/>
</dbReference>
<dbReference type="GO" id="GO:0031032">
    <property type="term" value="P:actomyosin structure organization"/>
    <property type="evidence" value="ECO:0000315"/>
    <property type="project" value="dictyBase"/>
</dbReference>
<dbReference type="GO" id="GO:0071321">
    <property type="term" value="P:cellular response to cGMP"/>
    <property type="evidence" value="ECO:0000315"/>
    <property type="project" value="dictyBase"/>
</dbReference>
<dbReference type="GO" id="GO:0006935">
    <property type="term" value="P:chemotaxis"/>
    <property type="evidence" value="ECO:0000315"/>
    <property type="project" value="dictyBase"/>
</dbReference>
<dbReference type="GO" id="GO:0006972">
    <property type="term" value="P:hyperosmotic response"/>
    <property type="evidence" value="ECO:0000315"/>
    <property type="project" value="dictyBase"/>
</dbReference>
<dbReference type="GO" id="GO:1902850">
    <property type="term" value="P:microtubule cytoskeleton organization involved in mitosis"/>
    <property type="evidence" value="ECO:0000315"/>
    <property type="project" value="dictyBase"/>
</dbReference>
<dbReference type="GO" id="GO:0000281">
    <property type="term" value="P:mitotic cytokinesis"/>
    <property type="evidence" value="ECO:0000315"/>
    <property type="project" value="dictyBase"/>
</dbReference>
<dbReference type="GO" id="GO:0030336">
    <property type="term" value="P:negative regulation of cell migration"/>
    <property type="evidence" value="ECO:0000315"/>
    <property type="project" value="dictyBase"/>
</dbReference>
<dbReference type="GO" id="GO:0048550">
    <property type="term" value="P:negative regulation of pinocytosis"/>
    <property type="evidence" value="ECO:0000315"/>
    <property type="project" value="dictyBase"/>
</dbReference>
<dbReference type="GO" id="GO:0006997">
    <property type="term" value="P:nucleus organization"/>
    <property type="evidence" value="ECO:0000315"/>
    <property type="project" value="dictyBase"/>
</dbReference>
<dbReference type="GO" id="GO:0030838">
    <property type="term" value="P:positive regulation of actin filament polymerization"/>
    <property type="evidence" value="ECO:0000270"/>
    <property type="project" value="dictyBase"/>
</dbReference>
<dbReference type="GO" id="GO:0050766">
    <property type="term" value="P:positive regulation of phagocytosis"/>
    <property type="evidence" value="ECO:0000315"/>
    <property type="project" value="dictyBase"/>
</dbReference>
<dbReference type="GO" id="GO:1900026">
    <property type="term" value="P:positive regulation of substrate adhesion-dependent cell spreading"/>
    <property type="evidence" value="ECO:0000314"/>
    <property type="project" value="dictyBase"/>
</dbReference>
<dbReference type="GO" id="GO:1904515">
    <property type="term" value="P:positive regulation of TORC2 signaling"/>
    <property type="evidence" value="ECO:0000316"/>
    <property type="project" value="dictyBase"/>
</dbReference>
<dbReference type="GO" id="GO:0032486">
    <property type="term" value="P:Rap protein signal transduction"/>
    <property type="evidence" value="ECO:0007669"/>
    <property type="project" value="InterPro"/>
</dbReference>
<dbReference type="GO" id="GO:0032956">
    <property type="term" value="P:regulation of actin cytoskeleton organization"/>
    <property type="evidence" value="ECO:0000315"/>
    <property type="project" value="dictyBase"/>
</dbReference>
<dbReference type="GO" id="GO:0030833">
    <property type="term" value="P:regulation of actin filament polymerization"/>
    <property type="evidence" value="ECO:0000315"/>
    <property type="project" value="dictyBase"/>
</dbReference>
<dbReference type="GO" id="GO:0022407">
    <property type="term" value="P:regulation of cell-cell adhesion"/>
    <property type="evidence" value="ECO:0000316"/>
    <property type="project" value="dictyBase"/>
</dbReference>
<dbReference type="GO" id="GO:0043520">
    <property type="term" value="P:regulation of myosin II filament assembly"/>
    <property type="evidence" value="ECO:0000315"/>
    <property type="project" value="dictyBase"/>
</dbReference>
<dbReference type="GO" id="GO:0046578">
    <property type="term" value="P:regulation of Ras protein signal transduction"/>
    <property type="evidence" value="ECO:0000314"/>
    <property type="project" value="dictyBase"/>
</dbReference>
<dbReference type="GO" id="GO:0009409">
    <property type="term" value="P:response to cold"/>
    <property type="evidence" value="ECO:0000270"/>
    <property type="project" value="dictyBase"/>
</dbReference>
<dbReference type="GO" id="GO:0030587">
    <property type="term" value="P:sorocarp development"/>
    <property type="evidence" value="ECO:0000315"/>
    <property type="project" value="dictyBase"/>
</dbReference>
<dbReference type="CDD" id="cd04175">
    <property type="entry name" value="Rap1"/>
    <property type="match status" value="1"/>
</dbReference>
<dbReference type="FunFam" id="3.40.50.300:FF:000182">
    <property type="entry name" value="ras-related protein Rap-1b"/>
    <property type="match status" value="1"/>
</dbReference>
<dbReference type="Gene3D" id="3.40.50.300">
    <property type="entry name" value="P-loop containing nucleotide triphosphate hydrolases"/>
    <property type="match status" value="1"/>
</dbReference>
<dbReference type="InterPro" id="IPR027417">
    <property type="entry name" value="P-loop_NTPase"/>
</dbReference>
<dbReference type="InterPro" id="IPR038851">
    <property type="entry name" value="Rap1"/>
</dbReference>
<dbReference type="InterPro" id="IPR005225">
    <property type="entry name" value="Small_GTP-bd"/>
</dbReference>
<dbReference type="InterPro" id="IPR001806">
    <property type="entry name" value="Small_GTPase"/>
</dbReference>
<dbReference type="InterPro" id="IPR020849">
    <property type="entry name" value="Small_GTPase_Ras-type"/>
</dbReference>
<dbReference type="NCBIfam" id="TIGR00231">
    <property type="entry name" value="small_GTP"/>
    <property type="match status" value="1"/>
</dbReference>
<dbReference type="PANTHER" id="PTHR24070">
    <property type="entry name" value="RAS, DI-RAS, AND RHEB FAMILY MEMBERS OF SMALL GTPASE SUPERFAMILY"/>
    <property type="match status" value="1"/>
</dbReference>
<dbReference type="Pfam" id="PF00071">
    <property type="entry name" value="Ras"/>
    <property type="match status" value="1"/>
</dbReference>
<dbReference type="PRINTS" id="PR00449">
    <property type="entry name" value="RASTRNSFRMNG"/>
</dbReference>
<dbReference type="SMART" id="SM00175">
    <property type="entry name" value="RAB"/>
    <property type="match status" value="1"/>
</dbReference>
<dbReference type="SMART" id="SM00176">
    <property type="entry name" value="RAN"/>
    <property type="match status" value="1"/>
</dbReference>
<dbReference type="SMART" id="SM00173">
    <property type="entry name" value="RAS"/>
    <property type="match status" value="1"/>
</dbReference>
<dbReference type="SMART" id="SM00174">
    <property type="entry name" value="RHO"/>
    <property type="match status" value="1"/>
</dbReference>
<dbReference type="SUPFAM" id="SSF52540">
    <property type="entry name" value="P-loop containing nucleoside triphosphate hydrolases"/>
    <property type="match status" value="1"/>
</dbReference>
<dbReference type="PROSITE" id="PS51421">
    <property type="entry name" value="RAS"/>
    <property type="match status" value="1"/>
</dbReference>
<name>RAPA_DICDI</name>
<feature type="chain" id="PRO_0000082684" description="Ras-related protein rapA">
    <location>
        <begin position="1"/>
        <end position="183"/>
    </location>
</feature>
<feature type="propeptide" id="PRO_0000281327" description="Removed in mature form" evidence="1">
    <location>
        <begin position="184"/>
        <end position="186"/>
    </location>
</feature>
<feature type="short sequence motif" description="Effector region">
    <location>
        <begin position="34"/>
        <end position="42"/>
    </location>
</feature>
<feature type="binding site" evidence="1">
    <location>
        <begin position="12"/>
        <end position="19"/>
    </location>
    <ligand>
        <name>GTP</name>
        <dbReference type="ChEBI" id="CHEBI:37565"/>
    </ligand>
</feature>
<feature type="binding site" evidence="1">
    <location>
        <begin position="59"/>
        <end position="63"/>
    </location>
    <ligand>
        <name>GTP</name>
        <dbReference type="ChEBI" id="CHEBI:37565"/>
    </ligand>
</feature>
<feature type="binding site" evidence="1">
    <location>
        <begin position="118"/>
        <end position="121"/>
    </location>
    <ligand>
        <name>GTP</name>
        <dbReference type="ChEBI" id="CHEBI:37565"/>
    </ligand>
</feature>
<feature type="modified residue" description="Cysteine methyl ester" evidence="1">
    <location>
        <position position="183"/>
    </location>
</feature>
<feature type="lipid moiety-binding region" description="S-geranylgeranyl cysteine" evidence="1">
    <location>
        <position position="183"/>
    </location>
</feature>
<feature type="mutagenesis site" description="Enhanced phagocytosis." evidence="3 5">
    <original>G</original>
    <variation>T</variation>
    <location>
        <position position="12"/>
    </location>
</feature>
<feature type="mutagenesis site" description="Exhibits severely reduced chemotaxis towards cAMP and enhanced accumulation of cGMP." evidence="3 5">
    <original>G</original>
    <variation>V</variation>
    <location>
        <position position="12"/>
    </location>
</feature>
<organism>
    <name type="scientific">Dictyostelium discoideum</name>
    <name type="common">Social amoeba</name>
    <dbReference type="NCBI Taxonomy" id="44689"/>
    <lineage>
        <taxon>Eukaryota</taxon>
        <taxon>Amoebozoa</taxon>
        <taxon>Evosea</taxon>
        <taxon>Eumycetozoa</taxon>
        <taxon>Dictyostelia</taxon>
        <taxon>Dictyosteliales</taxon>
        <taxon>Dictyosteliaceae</taxon>
        <taxon>Dictyostelium</taxon>
    </lineage>
</organism>